<evidence type="ECO:0000250" key="1"/>
<evidence type="ECO:0000250" key="2">
    <source>
        <dbReference type="UniProtKB" id="P29590"/>
    </source>
</evidence>
<evidence type="ECO:0000255" key="3"/>
<evidence type="ECO:0000255" key="4">
    <source>
        <dbReference type="PROSITE-ProRule" id="PRU00024"/>
    </source>
</evidence>
<evidence type="ECO:0000255" key="5">
    <source>
        <dbReference type="PROSITE-ProRule" id="PRU00175"/>
    </source>
</evidence>
<evidence type="ECO:0000256" key="6">
    <source>
        <dbReference type="SAM" id="MobiDB-lite"/>
    </source>
</evidence>
<evidence type="ECO:0000269" key="7">
    <source>
    </source>
</evidence>
<evidence type="ECO:0000269" key="8">
    <source>
    </source>
</evidence>
<evidence type="ECO:0000269" key="9">
    <source>
    </source>
</evidence>
<evidence type="ECO:0000269" key="10">
    <source>
    </source>
</evidence>
<evidence type="ECO:0000269" key="11">
    <source>
    </source>
</evidence>
<evidence type="ECO:0000269" key="12">
    <source>
    </source>
</evidence>
<evidence type="ECO:0000269" key="13">
    <source>
    </source>
</evidence>
<evidence type="ECO:0000269" key="14">
    <source>
    </source>
</evidence>
<evidence type="ECO:0000269" key="15">
    <source>
    </source>
</evidence>
<evidence type="ECO:0000269" key="16">
    <source>
    </source>
</evidence>
<evidence type="ECO:0000269" key="17">
    <source>
    </source>
</evidence>
<evidence type="ECO:0000269" key="18">
    <source>
    </source>
</evidence>
<evidence type="ECO:0000269" key="19">
    <source>
    </source>
</evidence>
<evidence type="ECO:0000269" key="20">
    <source>
    </source>
</evidence>
<evidence type="ECO:0000269" key="21">
    <source>
    </source>
</evidence>
<evidence type="ECO:0000269" key="22">
    <source>
    </source>
</evidence>
<evidence type="ECO:0000269" key="23">
    <source>
    </source>
</evidence>
<evidence type="ECO:0000269" key="24">
    <source>
    </source>
</evidence>
<evidence type="ECO:0000269" key="25">
    <source>
    </source>
</evidence>
<evidence type="ECO:0000269" key="26">
    <source>
    </source>
</evidence>
<evidence type="ECO:0000269" key="27">
    <source>
    </source>
</evidence>
<evidence type="ECO:0000269" key="28">
    <source>
    </source>
</evidence>
<evidence type="ECO:0000303" key="29">
    <source>
    </source>
</evidence>
<evidence type="ECO:0000303" key="30">
    <source>
    </source>
</evidence>
<evidence type="ECO:0000305" key="31"/>
<evidence type="ECO:0007744" key="32">
    <source>
    </source>
</evidence>
<evidence type="ECO:0007744" key="33">
    <source>
    </source>
</evidence>
<evidence type="ECO:0007744" key="34">
    <source>
    </source>
</evidence>
<feature type="chain" id="PRO_0000056002" description="Protein PML">
    <location>
        <begin position="1"/>
        <end position="885"/>
    </location>
</feature>
<feature type="zinc finger region" description="RING-type" evidence="5">
    <location>
        <begin position="62"/>
        <end position="97"/>
    </location>
</feature>
<feature type="zinc finger region" description="B box-type 1" evidence="4">
    <location>
        <begin position="129"/>
        <end position="171"/>
    </location>
</feature>
<feature type="zinc finger region" description="B box-type 2" evidence="4">
    <location>
        <begin position="188"/>
        <end position="239"/>
    </location>
</feature>
<feature type="region of interest" description="Disordered" evidence="6">
    <location>
        <begin position="1"/>
        <end position="48"/>
    </location>
</feature>
<feature type="region of interest" description="Disordered" evidence="6">
    <location>
        <begin position="404"/>
        <end position="434"/>
    </location>
</feature>
<feature type="region of interest" description="Interaction with PER2" evidence="1">
    <location>
        <begin position="458"/>
        <end position="565"/>
    </location>
</feature>
<feature type="region of interest" description="Disordered" evidence="6">
    <location>
        <begin position="500"/>
        <end position="599"/>
    </location>
</feature>
<feature type="region of interest" description="Sumo interaction motif (SIM)" evidence="1">
    <location>
        <begin position="566"/>
        <end position="572"/>
    </location>
</feature>
<feature type="coiled-coil region" evidence="3">
    <location>
        <begin position="295"/>
        <end position="331"/>
    </location>
</feature>
<feature type="short sequence motif" description="Nuclear localization signal" evidence="1">
    <location>
        <begin position="486"/>
        <end position="500"/>
    </location>
</feature>
<feature type="compositionally biased region" description="Polar residues" evidence="6">
    <location>
        <begin position="407"/>
        <end position="425"/>
    </location>
</feature>
<feature type="compositionally biased region" description="Polar residues" evidence="6">
    <location>
        <begin position="512"/>
        <end position="526"/>
    </location>
</feature>
<feature type="compositionally biased region" description="Polar residues" evidence="6">
    <location>
        <begin position="550"/>
        <end position="559"/>
    </location>
</feature>
<feature type="binding site" evidence="1">
    <location>
        <position position="62"/>
    </location>
    <ligand>
        <name>Zn(2+)</name>
        <dbReference type="ChEBI" id="CHEBI:29105"/>
        <label>1</label>
    </ligand>
</feature>
<feature type="binding site" evidence="1">
    <location>
        <position position="65"/>
    </location>
    <ligand>
        <name>Zn(2+)</name>
        <dbReference type="ChEBI" id="CHEBI:29105"/>
        <label>1</label>
    </ligand>
</feature>
<feature type="binding site" evidence="1">
    <location>
        <position position="77"/>
    </location>
    <ligand>
        <name>Zn(2+)</name>
        <dbReference type="ChEBI" id="CHEBI:29105"/>
        <label>2</label>
    </ligand>
</feature>
<feature type="binding site" evidence="1">
    <location>
        <position position="79"/>
    </location>
    <ligand>
        <name>Zn(2+)</name>
        <dbReference type="ChEBI" id="CHEBI:29105"/>
        <label>2</label>
    </ligand>
</feature>
<feature type="binding site" evidence="1">
    <location>
        <position position="82"/>
    </location>
    <ligand>
        <name>Zn(2+)</name>
        <dbReference type="ChEBI" id="CHEBI:29105"/>
        <label>1</label>
    </ligand>
</feature>
<feature type="binding site" evidence="1">
    <location>
        <position position="85"/>
    </location>
    <ligand>
        <name>Zn(2+)</name>
        <dbReference type="ChEBI" id="CHEBI:29105"/>
        <label>1</label>
    </ligand>
</feature>
<feature type="binding site" evidence="1">
    <location>
        <position position="93"/>
    </location>
    <ligand>
        <name>Zn(2+)</name>
        <dbReference type="ChEBI" id="CHEBI:29105"/>
        <label>2</label>
    </ligand>
</feature>
<feature type="binding site" evidence="1">
    <location>
        <position position="96"/>
    </location>
    <ligand>
        <name>Zn(2+)</name>
        <dbReference type="ChEBI" id="CHEBI:29105"/>
        <label>2</label>
    </ligand>
</feature>
<feature type="binding site" evidence="4">
    <location>
        <position position="134"/>
    </location>
    <ligand>
        <name>Zn(2+)</name>
        <dbReference type="ChEBI" id="CHEBI:29105"/>
        <label>3</label>
    </ligand>
</feature>
<feature type="binding site" evidence="4">
    <location>
        <position position="137"/>
    </location>
    <ligand>
        <name>Zn(2+)</name>
        <dbReference type="ChEBI" id="CHEBI:29105"/>
        <label>3</label>
    </ligand>
</feature>
<feature type="binding site" evidence="4">
    <location>
        <position position="156"/>
    </location>
    <ligand>
        <name>Zn(2+)</name>
        <dbReference type="ChEBI" id="CHEBI:29105"/>
        <label>3</label>
    </ligand>
</feature>
<feature type="binding site" evidence="4">
    <location>
        <position position="160"/>
    </location>
    <ligand>
        <name>Zn(2+)</name>
        <dbReference type="ChEBI" id="CHEBI:29105"/>
        <label>3</label>
    </ligand>
</feature>
<feature type="binding site" evidence="4">
    <location>
        <position position="193"/>
    </location>
    <ligand>
        <name>Zn(2+)</name>
        <dbReference type="ChEBI" id="CHEBI:29105"/>
        <label>4</label>
    </ligand>
</feature>
<feature type="binding site" evidence="4">
    <location>
        <position position="198"/>
    </location>
    <ligand>
        <name>Zn(2+)</name>
        <dbReference type="ChEBI" id="CHEBI:29105"/>
        <label>4</label>
    </ligand>
</feature>
<feature type="binding site" evidence="4">
    <location>
        <position position="219"/>
    </location>
    <ligand>
        <name>Zn(2+)</name>
        <dbReference type="ChEBI" id="CHEBI:29105"/>
        <label>4</label>
    </ligand>
</feature>
<feature type="binding site" evidence="4">
    <location>
        <position position="226"/>
    </location>
    <ligand>
        <name>Zn(2+)</name>
        <dbReference type="ChEBI" id="CHEBI:29105"/>
        <label>4</label>
    </ligand>
</feature>
<feature type="modified residue" description="Phosphoserine; by HIPK2" evidence="32 34">
    <location>
        <position position="17"/>
    </location>
</feature>
<feature type="modified residue" description="Phosphoserine; by HIPK2 and MAPK1" evidence="2">
    <location>
        <position position="45"/>
    </location>
</feature>
<feature type="modified residue" description="Phosphoserine; by HIPK2 and MAPK1" evidence="2">
    <location>
        <position position="47"/>
    </location>
</feature>
<feature type="modified residue" description="Phosphoserine" evidence="34">
    <location>
        <position position="404"/>
    </location>
</feature>
<feature type="modified residue" description="N6-acetyllysine; alternate" evidence="2">
    <location>
        <position position="497"/>
    </location>
</feature>
<feature type="modified residue" description="Phosphoserine" evidence="34">
    <location>
        <position position="503"/>
    </location>
</feature>
<feature type="modified residue" description="Phosphoserine" evidence="32 34">
    <location>
        <position position="514"/>
    </location>
</feature>
<feature type="modified residue" description="Phosphoserine; by MAPK1" evidence="32 34">
    <location>
        <position position="515"/>
    </location>
</feature>
<feature type="modified residue" description="Phosphoserine" evidence="2">
    <location>
        <position position="522"/>
    </location>
</feature>
<feature type="modified residue" description="N6-acetyllysine" evidence="2">
    <location>
        <position position="525"/>
    </location>
</feature>
<feature type="modified residue" description="Phosphoserine; by CDK1 and CDK2" evidence="33 34">
    <location>
        <position position="528"/>
    </location>
</feature>
<feature type="modified residue" description="Phosphothreonine" evidence="34">
    <location>
        <position position="535"/>
    </location>
</feature>
<feature type="modified residue" description="Phosphoserine" evidence="34">
    <location>
        <position position="536"/>
    </location>
</feature>
<feature type="modified residue" description="Phosphoserine; by MAPK1" evidence="2">
    <location>
        <position position="540"/>
    </location>
</feature>
<feature type="modified residue" description="Phosphoserine; by CK2" evidence="2">
    <location>
        <position position="575"/>
    </location>
</feature>
<feature type="modified residue" description="Phosphoserine" evidence="34">
    <location>
        <position position="609"/>
    </location>
</feature>
<feature type="cross-link" description="Glycyl lysine isopeptide (Lys-Gly) (interchain with G-Cter in SUMO); alternate" evidence="1">
    <location>
        <position position="70"/>
    </location>
</feature>
<feature type="cross-link" description="Glycyl lysine isopeptide (Lys-Gly) (interchain with G-Cter in SUMO2); alternate" evidence="2">
    <location>
        <position position="70"/>
    </location>
</feature>
<feature type="cross-link" description="Glycyl lysine isopeptide (Lys-Gly) (interchain with G-Cter in SUMO); alternate" evidence="1">
    <location>
        <position position="165"/>
    </location>
</feature>
<feature type="cross-link" description="Glycyl lysine isopeptide (Lys-Gly) (interchain with G-Cter in SUMO2); alternate" evidence="2">
    <location>
        <position position="165"/>
    </location>
</feature>
<feature type="cross-link" description="Glycyl lysine isopeptide (Lys-Gly) (interchain with G-Cter in SUMO2); alternate" evidence="2">
    <location>
        <position position="384"/>
    </location>
</feature>
<feature type="cross-link" description="Glycyl lysine isopeptide (Lys-Gly) (interchain with G-Cter in ubiquitin); alternate" evidence="2">
    <location>
        <position position="384"/>
    </location>
</feature>
<feature type="cross-link" description="Glycyl lysine isopeptide (Lys-Gly) (interchain with G-Cter in SUMO2); alternate" evidence="2">
    <location>
        <position position="486"/>
    </location>
</feature>
<feature type="cross-link" description="Glycyl lysine isopeptide (Lys-Gly) (interchain with G-Cter in ubiquitin); alternate" evidence="2">
    <location>
        <position position="486"/>
    </location>
</feature>
<feature type="cross-link" description="Glycyl lysine isopeptide (Lys-Gly) (interchain with G-Cter in SUMO2)" evidence="2">
    <location>
        <position position="488"/>
    </location>
</feature>
<feature type="cross-link" description="Glycyl lysine isopeptide (Lys-Gly) (interchain with G-Cter in SUMO2); alternate" evidence="2">
    <location>
        <position position="497"/>
    </location>
</feature>
<feature type="cross-link" description="Glycyl lysine isopeptide (Lys-Gly) (interchain with G-Cter in SUMO); alternate" evidence="1">
    <location>
        <position position="500"/>
    </location>
</feature>
<feature type="cross-link" description="Glycyl lysine isopeptide (Lys-Gly) (interchain with G-Cter in SUMO2); alternate" evidence="2">
    <location>
        <position position="500"/>
    </location>
</feature>
<feature type="splice variant" id="VSP_026028" description="In isoform 2." evidence="29 30">
    <location>
        <begin position="431"/>
        <end position="476"/>
    </location>
</feature>
<feature type="sequence conflict" description="In Ref. 1; BAC25716." evidence="31" ref="1">
    <original>G</original>
    <variation>V</variation>
    <location>
        <position position="210"/>
    </location>
</feature>
<feature type="sequence conflict" description="In Ref. 1; BAC25716." evidence="31" ref="1">
    <original>A</original>
    <variation>V</variation>
    <location>
        <position position="414"/>
    </location>
</feature>
<feature type="sequence conflict" description="In Ref. 1; BAC25716." evidence="31" ref="1">
    <original>T</original>
    <variation>S</variation>
    <location>
        <position position="424"/>
    </location>
</feature>
<feature type="sequence conflict" description="In Ref. 2; AAH20990." evidence="31" ref="2">
    <original>E</original>
    <variation>V</variation>
    <location>
        <position position="429"/>
    </location>
</feature>
<keyword id="KW-0007">Acetylation</keyword>
<keyword id="KW-0010">Activator</keyword>
<keyword id="KW-0025">Alternative splicing</keyword>
<keyword id="KW-0051">Antiviral defense</keyword>
<keyword id="KW-0053">Apoptosis</keyword>
<keyword id="KW-0090">Biological rhythms</keyword>
<keyword id="KW-0175">Coiled coil</keyword>
<keyword id="KW-0963">Cytoplasm</keyword>
<keyword id="KW-0238">DNA-binding</keyword>
<keyword id="KW-0256">Endoplasmic reticulum</keyword>
<keyword id="KW-0967">Endosome</keyword>
<keyword id="KW-0945">Host-virus interaction</keyword>
<keyword id="KW-0391">Immunity</keyword>
<keyword id="KW-0399">Innate immunity</keyword>
<keyword id="KW-1017">Isopeptide bond</keyword>
<keyword id="KW-0472">Membrane</keyword>
<keyword id="KW-0479">Metal-binding</keyword>
<keyword id="KW-0539">Nucleus</keyword>
<keyword id="KW-0597">Phosphoprotein</keyword>
<keyword id="KW-1185">Reference proteome</keyword>
<keyword id="KW-0677">Repeat</keyword>
<keyword id="KW-0804">Transcription</keyword>
<keyword id="KW-0805">Transcription regulation</keyword>
<keyword id="KW-0043">Tumor suppressor</keyword>
<keyword id="KW-0832">Ubl conjugation</keyword>
<keyword id="KW-0862">Zinc</keyword>
<keyword id="KW-0863">Zinc-finger</keyword>
<dbReference type="EMBL" id="AK028044">
    <property type="protein sequence ID" value="BAC25716.1"/>
    <property type="molecule type" value="mRNA"/>
</dbReference>
<dbReference type="EMBL" id="BC020990">
    <property type="protein sequence ID" value="AAH20990.2"/>
    <property type="molecule type" value="mRNA"/>
</dbReference>
<dbReference type="EMBL" id="U33626">
    <property type="protein sequence ID" value="AAA97601.2"/>
    <property type="status" value="ALT_INIT"/>
    <property type="molecule type" value="mRNA"/>
</dbReference>
<dbReference type="CCDS" id="CCDS23239.1">
    <molecule id="Q60953-1"/>
</dbReference>
<dbReference type="CCDS" id="CCDS23240.2">
    <molecule id="Q60953-2"/>
</dbReference>
<dbReference type="RefSeq" id="NP_001298017.1">
    <property type="nucleotide sequence ID" value="NM_001311088.1"/>
</dbReference>
<dbReference type="RefSeq" id="NP_032910.3">
    <molecule id="Q60953-2"/>
    <property type="nucleotide sequence ID" value="NM_008884.5"/>
</dbReference>
<dbReference type="RefSeq" id="NP_835188.2">
    <molecule id="Q60953-1"/>
    <property type="nucleotide sequence ID" value="NM_178087.5"/>
</dbReference>
<dbReference type="BioGRID" id="202265">
    <property type="interactions" value="28"/>
</dbReference>
<dbReference type="DIP" id="DIP-29279N"/>
<dbReference type="FunCoup" id="Q60953">
    <property type="interactions" value="2530"/>
</dbReference>
<dbReference type="IntAct" id="Q60953">
    <property type="interactions" value="23"/>
</dbReference>
<dbReference type="MINT" id="Q60953"/>
<dbReference type="STRING" id="10090.ENSMUSP00000082816"/>
<dbReference type="GlyGen" id="Q60953">
    <property type="glycosylation" value="2 sites, 1 O-linked glycan (1 site)"/>
</dbReference>
<dbReference type="iPTMnet" id="Q60953"/>
<dbReference type="PhosphoSitePlus" id="Q60953"/>
<dbReference type="jPOST" id="Q60953"/>
<dbReference type="PaxDb" id="10090-ENSMUSP00000082816"/>
<dbReference type="PeptideAtlas" id="Q60953"/>
<dbReference type="ProteomicsDB" id="289459">
    <molecule id="Q60953-1"/>
</dbReference>
<dbReference type="ProteomicsDB" id="289460">
    <molecule id="Q60953-2"/>
</dbReference>
<dbReference type="Pumba" id="Q60953"/>
<dbReference type="Antibodypedia" id="1737">
    <property type="antibodies" value="598 antibodies from 44 providers"/>
</dbReference>
<dbReference type="DNASU" id="18854"/>
<dbReference type="Ensembl" id="ENSMUST00000085673.11">
    <molecule id="Q60953-1"/>
    <property type="protein sequence ID" value="ENSMUSP00000082816.5"/>
    <property type="gene ID" value="ENSMUSG00000036986.17"/>
</dbReference>
<dbReference type="Ensembl" id="ENSMUST00000114136.9">
    <molecule id="Q60953-2"/>
    <property type="protein sequence ID" value="ENSMUSP00000109771.3"/>
    <property type="gene ID" value="ENSMUSG00000036986.17"/>
</dbReference>
<dbReference type="GeneID" id="18854"/>
<dbReference type="KEGG" id="mmu:18854"/>
<dbReference type="UCSC" id="uc009pwp.2">
    <molecule id="Q60953-1"/>
    <property type="organism name" value="mouse"/>
</dbReference>
<dbReference type="UCSC" id="uc009pwq.2">
    <molecule id="Q60953-2"/>
    <property type="organism name" value="mouse"/>
</dbReference>
<dbReference type="AGR" id="MGI:104662"/>
<dbReference type="CTD" id="5371"/>
<dbReference type="MGI" id="MGI:104662">
    <property type="gene designation" value="Pml"/>
</dbReference>
<dbReference type="VEuPathDB" id="HostDB:ENSMUSG00000036986"/>
<dbReference type="eggNOG" id="KOG2177">
    <property type="taxonomic scope" value="Eukaryota"/>
</dbReference>
<dbReference type="GeneTree" id="ENSGT00510000048454"/>
<dbReference type="HOGENOM" id="CLU_009136_1_0_1"/>
<dbReference type="InParanoid" id="Q60953"/>
<dbReference type="OMA" id="KPICCIC"/>
<dbReference type="OrthoDB" id="10250935at2759"/>
<dbReference type="PhylomeDB" id="Q60953"/>
<dbReference type="TreeFam" id="TF336434"/>
<dbReference type="Reactome" id="R-MMU-3108214">
    <property type="pathway name" value="SUMOylation of DNA damage response and repair proteins"/>
</dbReference>
<dbReference type="Reactome" id="R-MMU-3232142">
    <property type="pathway name" value="SUMOylation of ubiquitinylation proteins"/>
</dbReference>
<dbReference type="Reactome" id="R-MMU-6804758">
    <property type="pathway name" value="Regulation of TP53 Activity through Acetylation"/>
</dbReference>
<dbReference type="Reactome" id="R-MMU-8934593">
    <property type="pathway name" value="Regulation of RUNX1 Expression and Activity"/>
</dbReference>
<dbReference type="Reactome" id="R-MMU-8948747">
    <property type="pathway name" value="Regulation of PTEN localization"/>
</dbReference>
<dbReference type="BioGRID-ORCS" id="18854">
    <property type="hits" value="2 hits in 119 CRISPR screens"/>
</dbReference>
<dbReference type="ChiTaRS" id="Pml">
    <property type="organism name" value="mouse"/>
</dbReference>
<dbReference type="PRO" id="PR:Q60953"/>
<dbReference type="Proteomes" id="UP000000589">
    <property type="component" value="Chromosome 9"/>
</dbReference>
<dbReference type="RNAct" id="Q60953">
    <property type="molecule type" value="protein"/>
</dbReference>
<dbReference type="Bgee" id="ENSMUSG00000036986">
    <property type="expression patterns" value="Expressed in embryonic post-anal tail and 233 other cell types or tissues"/>
</dbReference>
<dbReference type="ExpressionAtlas" id="Q60953">
    <property type="expression patterns" value="baseline and differential"/>
</dbReference>
<dbReference type="GO" id="GO:0000781">
    <property type="term" value="C:chromosome, telomeric region"/>
    <property type="evidence" value="ECO:0007669"/>
    <property type="project" value="Ensembl"/>
</dbReference>
<dbReference type="GO" id="GO:0005829">
    <property type="term" value="C:cytosol"/>
    <property type="evidence" value="ECO:0000314"/>
    <property type="project" value="UniProtKB"/>
</dbReference>
<dbReference type="GO" id="GO:0031901">
    <property type="term" value="C:early endosome membrane"/>
    <property type="evidence" value="ECO:0007669"/>
    <property type="project" value="UniProtKB-SubCell"/>
</dbReference>
<dbReference type="GO" id="GO:0005789">
    <property type="term" value="C:endoplasmic reticulum membrane"/>
    <property type="evidence" value="ECO:0007669"/>
    <property type="project" value="UniProtKB-SubCell"/>
</dbReference>
<dbReference type="GO" id="GO:0016363">
    <property type="term" value="C:nuclear matrix"/>
    <property type="evidence" value="ECO:0000314"/>
    <property type="project" value="MGI"/>
</dbReference>
<dbReference type="GO" id="GO:0005730">
    <property type="term" value="C:nucleolus"/>
    <property type="evidence" value="ECO:0000250"/>
    <property type="project" value="UniProtKB"/>
</dbReference>
<dbReference type="GO" id="GO:0005654">
    <property type="term" value="C:nucleoplasm"/>
    <property type="evidence" value="ECO:0000250"/>
    <property type="project" value="UniProtKB"/>
</dbReference>
<dbReference type="GO" id="GO:0005634">
    <property type="term" value="C:nucleus"/>
    <property type="evidence" value="ECO:0000314"/>
    <property type="project" value="UniProtKB"/>
</dbReference>
<dbReference type="GO" id="GO:0016605">
    <property type="term" value="C:PML body"/>
    <property type="evidence" value="ECO:0000314"/>
    <property type="project" value="MGI"/>
</dbReference>
<dbReference type="GO" id="GO:0003677">
    <property type="term" value="F:DNA binding"/>
    <property type="evidence" value="ECO:0007669"/>
    <property type="project" value="UniProtKB-KW"/>
</dbReference>
<dbReference type="GO" id="GO:0042803">
    <property type="term" value="F:protein homodimerization activity"/>
    <property type="evidence" value="ECO:0007669"/>
    <property type="project" value="Ensembl"/>
</dbReference>
<dbReference type="GO" id="GO:0046332">
    <property type="term" value="F:SMAD binding"/>
    <property type="evidence" value="ECO:0000314"/>
    <property type="project" value="MGI"/>
</dbReference>
<dbReference type="GO" id="GO:0032183">
    <property type="term" value="F:SUMO binding"/>
    <property type="evidence" value="ECO:0007669"/>
    <property type="project" value="Ensembl"/>
</dbReference>
<dbReference type="GO" id="GO:0003713">
    <property type="term" value="F:transcription coactivator activity"/>
    <property type="evidence" value="ECO:0000304"/>
    <property type="project" value="UniProtKB"/>
</dbReference>
<dbReference type="GO" id="GO:0031625">
    <property type="term" value="F:ubiquitin protein ligase binding"/>
    <property type="evidence" value="ECO:0007669"/>
    <property type="project" value="Ensembl"/>
</dbReference>
<dbReference type="GO" id="GO:0008270">
    <property type="term" value="F:zinc ion binding"/>
    <property type="evidence" value="ECO:0007669"/>
    <property type="project" value="UniProtKB-KW"/>
</dbReference>
<dbReference type="GO" id="GO:0060444">
    <property type="term" value="P:branching involved in mammary gland duct morphogenesis"/>
    <property type="evidence" value="ECO:0000315"/>
    <property type="project" value="MGI"/>
</dbReference>
<dbReference type="GO" id="GO:0045165">
    <property type="term" value="P:cell fate commitment"/>
    <property type="evidence" value="ECO:0000315"/>
    <property type="project" value="MGI"/>
</dbReference>
<dbReference type="GO" id="GO:0071353">
    <property type="term" value="P:cellular response to interleukin-4"/>
    <property type="evidence" value="ECO:0000314"/>
    <property type="project" value="MGI"/>
</dbReference>
<dbReference type="GO" id="GO:1990830">
    <property type="term" value="P:cellular response to leukemia inhibitory factor"/>
    <property type="evidence" value="ECO:0000270"/>
    <property type="project" value="MGI"/>
</dbReference>
<dbReference type="GO" id="GO:0090398">
    <property type="term" value="P:cellular senescence"/>
    <property type="evidence" value="ECO:0000250"/>
    <property type="project" value="UniProtKB"/>
</dbReference>
<dbReference type="GO" id="GO:0006338">
    <property type="term" value="P:chromatin remodeling"/>
    <property type="evidence" value="ECO:0000250"/>
    <property type="project" value="UniProtKB"/>
</dbReference>
<dbReference type="GO" id="GO:0032922">
    <property type="term" value="P:circadian regulation of gene expression"/>
    <property type="evidence" value="ECO:0000314"/>
    <property type="project" value="UniProtKB"/>
</dbReference>
<dbReference type="GO" id="GO:0030330">
    <property type="term" value="P:DNA damage response, signal transduction by p53 class mediator"/>
    <property type="evidence" value="ECO:0000315"/>
    <property type="project" value="UniProtKB"/>
</dbReference>
<dbReference type="GO" id="GO:0032469">
    <property type="term" value="P:endoplasmic reticulum calcium ion homeostasis"/>
    <property type="evidence" value="ECO:0000315"/>
    <property type="project" value="UniProtKB"/>
</dbReference>
<dbReference type="GO" id="GO:0043153">
    <property type="term" value="P:entrainment of circadian clock by photoperiod"/>
    <property type="evidence" value="ECO:0000314"/>
    <property type="project" value="UniProtKB"/>
</dbReference>
<dbReference type="GO" id="GO:0097191">
    <property type="term" value="P:extrinsic apoptotic signaling pathway"/>
    <property type="evidence" value="ECO:0000315"/>
    <property type="project" value="MGI"/>
</dbReference>
<dbReference type="GO" id="GO:0010761">
    <property type="term" value="P:fibroblast migration"/>
    <property type="evidence" value="ECO:0000315"/>
    <property type="project" value="CACAO"/>
</dbReference>
<dbReference type="GO" id="GO:0045087">
    <property type="term" value="P:innate immune response"/>
    <property type="evidence" value="ECO:0000314"/>
    <property type="project" value="UniProtKB"/>
</dbReference>
<dbReference type="GO" id="GO:0072332">
    <property type="term" value="P:intrinsic apoptotic signaling pathway by p53 class mediator"/>
    <property type="evidence" value="ECO:0000315"/>
    <property type="project" value="MGI"/>
</dbReference>
<dbReference type="GO" id="GO:0008630">
    <property type="term" value="P:intrinsic apoptotic signaling pathway in response to DNA damage"/>
    <property type="evidence" value="ECO:0000315"/>
    <property type="project" value="MGI"/>
</dbReference>
<dbReference type="GO" id="GO:0042771">
    <property type="term" value="P:intrinsic apoptotic signaling pathway in response to DNA damage by p53 class mediator"/>
    <property type="evidence" value="ECO:0000315"/>
    <property type="project" value="UniProtKB"/>
</dbReference>
<dbReference type="GO" id="GO:0070059">
    <property type="term" value="P:intrinsic apoptotic signaling pathway in response to endoplasmic reticulum stress"/>
    <property type="evidence" value="ECO:0000315"/>
    <property type="project" value="MGI"/>
</dbReference>
<dbReference type="GO" id="GO:0008631">
    <property type="term" value="P:intrinsic apoptotic signaling pathway in response to oxidative stress"/>
    <property type="evidence" value="ECO:0000315"/>
    <property type="project" value="MGI"/>
</dbReference>
<dbReference type="GO" id="GO:0051457">
    <property type="term" value="P:maintenance of protein location in nucleus"/>
    <property type="evidence" value="ECO:0000266"/>
    <property type="project" value="MGI"/>
</dbReference>
<dbReference type="GO" id="GO:0030099">
    <property type="term" value="P:myeloid cell differentiation"/>
    <property type="evidence" value="ECO:0000315"/>
    <property type="project" value="MGI"/>
</dbReference>
<dbReference type="GO" id="GO:0016525">
    <property type="term" value="P:negative regulation of angiogenesis"/>
    <property type="evidence" value="ECO:0000315"/>
    <property type="project" value="MGI"/>
</dbReference>
<dbReference type="GO" id="GO:0030308">
    <property type="term" value="P:negative regulation of cell growth"/>
    <property type="evidence" value="ECO:0000250"/>
    <property type="project" value="UniProtKB"/>
</dbReference>
<dbReference type="GO" id="GO:0008285">
    <property type="term" value="P:negative regulation of cell population proliferation"/>
    <property type="evidence" value="ECO:0000315"/>
    <property type="project" value="MGI"/>
</dbReference>
<dbReference type="GO" id="GO:0045892">
    <property type="term" value="P:negative regulation of DNA-templated transcription"/>
    <property type="evidence" value="ECO:0000250"/>
    <property type="project" value="UniProtKB"/>
</dbReference>
<dbReference type="GO" id="GO:0032691">
    <property type="term" value="P:negative regulation of interleukin-1 beta production"/>
    <property type="evidence" value="ECO:0000315"/>
    <property type="project" value="AgBase"/>
</dbReference>
<dbReference type="GO" id="GO:0032692">
    <property type="term" value="P:negative regulation of interleukin-1 production"/>
    <property type="evidence" value="ECO:0000315"/>
    <property type="project" value="AgBase"/>
</dbReference>
<dbReference type="GO" id="GO:2000059">
    <property type="term" value="P:negative regulation of ubiquitin-dependent protein catabolic process"/>
    <property type="evidence" value="ECO:0007669"/>
    <property type="project" value="Ensembl"/>
</dbReference>
<dbReference type="GO" id="GO:0090402">
    <property type="term" value="P:oncogene-induced cell senescence"/>
    <property type="evidence" value="ECO:0000315"/>
    <property type="project" value="UniProtKB"/>
</dbReference>
<dbReference type="GO" id="GO:0030578">
    <property type="term" value="P:PML body organization"/>
    <property type="evidence" value="ECO:0000314"/>
    <property type="project" value="MGI"/>
</dbReference>
<dbReference type="GO" id="GO:2001235">
    <property type="term" value="P:positive regulation of apoptotic signaling pathway"/>
    <property type="evidence" value="ECO:0000315"/>
    <property type="project" value="MGI"/>
</dbReference>
<dbReference type="GO" id="GO:2001238">
    <property type="term" value="P:positive regulation of extrinsic apoptotic signaling pathway"/>
    <property type="evidence" value="ECO:0007669"/>
    <property type="project" value="Ensembl"/>
</dbReference>
<dbReference type="GO" id="GO:0048146">
    <property type="term" value="P:positive regulation of fibroblast proliferation"/>
    <property type="evidence" value="ECO:0000315"/>
    <property type="project" value="CACAO"/>
</dbReference>
<dbReference type="GO" id="GO:2000758">
    <property type="term" value="P:positive regulation of peptidyl-lysine acetylation"/>
    <property type="evidence" value="ECO:0000315"/>
    <property type="project" value="UniProtKB"/>
</dbReference>
<dbReference type="GO" id="GO:1901798">
    <property type="term" value="P:positive regulation of signal transduction by p53 class mediator"/>
    <property type="evidence" value="ECO:0000315"/>
    <property type="project" value="UniProtKB"/>
</dbReference>
<dbReference type="GO" id="GO:0032206">
    <property type="term" value="P:positive regulation of telomere maintenance"/>
    <property type="evidence" value="ECO:0007669"/>
    <property type="project" value="Ensembl"/>
</dbReference>
<dbReference type="GO" id="GO:0043161">
    <property type="term" value="P:proteasome-mediated ubiquitin-dependent protein catabolic process"/>
    <property type="evidence" value="ECO:0000250"/>
    <property type="project" value="UniProtKB"/>
</dbReference>
<dbReference type="GO" id="GO:0006606">
    <property type="term" value="P:protein import into nucleus"/>
    <property type="evidence" value="ECO:0000315"/>
    <property type="project" value="MGI"/>
</dbReference>
<dbReference type="GO" id="GO:0006605">
    <property type="term" value="P:protein targeting"/>
    <property type="evidence" value="ECO:0000250"/>
    <property type="project" value="UniProtKB"/>
</dbReference>
<dbReference type="GO" id="GO:0065003">
    <property type="term" value="P:protein-containing complex assembly"/>
    <property type="evidence" value="ECO:0000250"/>
    <property type="project" value="UniProtKB"/>
</dbReference>
<dbReference type="GO" id="GO:0031503">
    <property type="term" value="P:protein-containing complex localization"/>
    <property type="evidence" value="ECO:0000315"/>
    <property type="project" value="MGI"/>
</dbReference>
<dbReference type="GO" id="GO:0010522">
    <property type="term" value="P:regulation of calcium ion transport into cytosol"/>
    <property type="evidence" value="ECO:0000315"/>
    <property type="project" value="UniProtKB"/>
</dbReference>
<dbReference type="GO" id="GO:0030155">
    <property type="term" value="P:regulation of cell adhesion"/>
    <property type="evidence" value="ECO:0000315"/>
    <property type="project" value="CACAO"/>
</dbReference>
<dbReference type="GO" id="GO:0042752">
    <property type="term" value="P:regulation of circadian rhythm"/>
    <property type="evidence" value="ECO:0000314"/>
    <property type="project" value="UniProtKB"/>
</dbReference>
<dbReference type="GO" id="GO:0006355">
    <property type="term" value="P:regulation of DNA-templated transcription"/>
    <property type="evidence" value="ECO:0000314"/>
    <property type="project" value="MGI"/>
</dbReference>
<dbReference type="GO" id="GO:2000779">
    <property type="term" value="P:regulation of double-strand break repair"/>
    <property type="evidence" value="ECO:0000250"/>
    <property type="project" value="UniProtKB"/>
</dbReference>
<dbReference type="GO" id="GO:0045343">
    <property type="term" value="P:regulation of MHC class I biosynthetic process"/>
    <property type="evidence" value="ECO:0000314"/>
    <property type="project" value="MGI"/>
</dbReference>
<dbReference type="GO" id="GO:0010332">
    <property type="term" value="P:response to gamma radiation"/>
    <property type="evidence" value="ECO:0000315"/>
    <property type="project" value="MGI"/>
</dbReference>
<dbReference type="GO" id="GO:0001666">
    <property type="term" value="P:response to hypoxia"/>
    <property type="evidence" value="ECO:0000315"/>
    <property type="project" value="MGI"/>
</dbReference>
<dbReference type="GO" id="GO:0009411">
    <property type="term" value="P:response to UV"/>
    <property type="evidence" value="ECO:0000315"/>
    <property type="project" value="MGI"/>
</dbReference>
<dbReference type="GO" id="GO:0048384">
    <property type="term" value="P:retinoic acid receptor signaling pathway"/>
    <property type="evidence" value="ECO:0000315"/>
    <property type="project" value="MGI"/>
</dbReference>
<dbReference type="GO" id="GO:0060395">
    <property type="term" value="P:SMAD protein signal transduction"/>
    <property type="evidence" value="ECO:0000315"/>
    <property type="project" value="MGI"/>
</dbReference>
<dbReference type="GO" id="GO:0044790">
    <property type="term" value="P:suppression of viral release by host"/>
    <property type="evidence" value="ECO:0000314"/>
    <property type="project" value="UniProtKB"/>
</dbReference>
<dbReference type="GO" id="GO:0007179">
    <property type="term" value="P:transforming growth factor beta receptor signaling pathway"/>
    <property type="evidence" value="ECO:0000315"/>
    <property type="project" value="MGI"/>
</dbReference>
<dbReference type="CDD" id="cd19804">
    <property type="entry name" value="Bbox1_TRIM19_C-V"/>
    <property type="match status" value="1"/>
</dbReference>
<dbReference type="CDD" id="cd16579">
    <property type="entry name" value="RING-HC_PML_C-V"/>
    <property type="match status" value="1"/>
</dbReference>
<dbReference type="FunFam" id="3.30.40.10:FF:000178">
    <property type="entry name" value="PML isoform 6"/>
    <property type="match status" value="1"/>
</dbReference>
<dbReference type="Gene3D" id="3.30.160.60">
    <property type="entry name" value="Classic Zinc Finger"/>
    <property type="match status" value="1"/>
</dbReference>
<dbReference type="Gene3D" id="3.30.40.10">
    <property type="entry name" value="Zinc/RING finger domain, C3HC4 (zinc finger)"/>
    <property type="match status" value="1"/>
</dbReference>
<dbReference type="InterPro" id="IPR021978">
    <property type="entry name" value="PML-like_CC"/>
</dbReference>
<dbReference type="InterPro" id="IPR047153">
    <property type="entry name" value="TRIM45/56/19-like"/>
</dbReference>
<dbReference type="InterPro" id="IPR000315">
    <property type="entry name" value="Znf_B-box"/>
</dbReference>
<dbReference type="InterPro" id="IPR001841">
    <property type="entry name" value="Znf_RING"/>
</dbReference>
<dbReference type="InterPro" id="IPR013083">
    <property type="entry name" value="Znf_RING/FYVE/PHD"/>
</dbReference>
<dbReference type="InterPro" id="IPR017907">
    <property type="entry name" value="Znf_RING_CS"/>
</dbReference>
<dbReference type="PANTHER" id="PTHR25462">
    <property type="entry name" value="BONUS, ISOFORM C-RELATED"/>
    <property type="match status" value="1"/>
</dbReference>
<dbReference type="PANTHER" id="PTHR25462:SF302">
    <property type="entry name" value="PROTEIN PML"/>
    <property type="match status" value="1"/>
</dbReference>
<dbReference type="Pfam" id="PF22586">
    <property type="entry name" value="ANCHR-like_BBOX"/>
    <property type="match status" value="1"/>
</dbReference>
<dbReference type="Pfam" id="PF25244">
    <property type="entry name" value="PML_C"/>
    <property type="match status" value="1"/>
</dbReference>
<dbReference type="Pfam" id="PF12126">
    <property type="entry name" value="PML_CC"/>
    <property type="match status" value="1"/>
</dbReference>
<dbReference type="SMART" id="SM00336">
    <property type="entry name" value="BBOX"/>
    <property type="match status" value="1"/>
</dbReference>
<dbReference type="SMART" id="SM00184">
    <property type="entry name" value="RING"/>
    <property type="match status" value="1"/>
</dbReference>
<dbReference type="SUPFAM" id="SSF57850">
    <property type="entry name" value="RING/U-box"/>
    <property type="match status" value="1"/>
</dbReference>
<dbReference type="PROSITE" id="PS50119">
    <property type="entry name" value="ZF_BBOX"/>
    <property type="match status" value="2"/>
</dbReference>
<dbReference type="PROSITE" id="PS00518">
    <property type="entry name" value="ZF_RING_1"/>
    <property type="match status" value="1"/>
</dbReference>
<dbReference type="PROSITE" id="PS50089">
    <property type="entry name" value="ZF_RING_2"/>
    <property type="match status" value="1"/>
</dbReference>
<name>PML_MOUSE</name>
<sequence length="885" mass="98242">METEPVSVQKVPAPPGSPCRQQDSALTPTPTMPPPEEPSEDYEHSQSPAEQAIQEEFQFLRCPSCQAQAKCPKLLPCLHTLCSGCLEAPGLQCPICKAPGQADANGEALDNVFFESLQRRLAVFRQIVDAQAACTRCKGLADFWCFECEQLICSKCFEAHQWYLKHEARPLADLRDNSVSSFLDSTRKSNIFCSNTNHRNPALTDIYCRGCAKPLCCTCALLDRNHSHLHCDIGEEIQQWHEELGTMTQTLEEQGRTFDSAHAQMCSAIGQLDHARADIEKQIRARVRQVVDYVQAQERELLEAVNDRYQRDYQEIAGQLSCLEAVLQRIRTSGALVKRMKLYASDQEVLDMHSFLRKALCSLRQEEPQNQKVQLLTRGFEEFKLCLQDFISCITQRINAAVASPEAASNQPEAASTHPVTTSTPEDLEQPKEVQSVQAQALELSKTQPVAMVKTVPGAHPVPVYAFSMQGPTYREEASQTVGSMKRKCSHEDCSRKIIKMESTEENEDRLATSSPEQSWPSTFKATSPPHLDGTSNPESTVPEKKILLPNNNHVTSDTGETEERVVVISSSEDSDTENLSSHELDDSSSESSSLQLEGPNSLKALDESLAEPHLEDRTLVFFDLKIDNETQKISQLAAVNRESKFRVLIQPEAFSVYSKAVSLEAGLRHFLSFLTTMHRPILACSRLWGPGLPIFFQTLSDINKLWEFQDTISGFLAVLPLIRERIPGASSFKLGNLAKTYLARNMSERSALASVLAMRDLCCLLEISPGLPLAQHIYSFSSLQCFASLQPLIQASVLPQSEARLLALHNVSFVELLNAYRTNRQEGLKKYVHYLSLQTTPLSSSASTQVAQFLQALSTHMEGLLEGHAPAGAEGKAESKGCLA</sequence>
<comment type="function">
    <text evidence="2 7 11 12 15 16 17 18 19 20 21 22 23 24 25 27 28">Functions via its association with PML-nuclear bodies (PML-NBs) in a wide range of important cellular processes, including tumor suppression, transcriptional regulation, apoptosis, senescence, DNA damage response, and viral defense mechanisms. Acts as the scaffold of PML-NBs allowing other proteins to shuttle in and out, a process which is regulated by SUMO-mediated modifications and interactions. Inhibits EIF4E-mediated mRNA nuclear export by reducing EIF4E affinity for the 5' 7-methylguanosine (m7G) cap of target mRNAs (By similarity). Positively regulates p53/TP53 by acting at different levels (by promoting its acetylation and phosphorylation and by inhibiting its MDM2-dependent degradation). Regulates phosphorylation of ITPR3 and plays a role in the regulation of calcium homeostasis at the endoplasmic reticulum. Regulates RB1 phosphorylation and activity. Acts as both a negative regulator of PPARGC1A acetylation and a potent activator of PPAR signaling and fatty acid oxidation. Regulates translation of HIF1A by sequestering MTOR, and thereby plays a role in neoangiogenesis and tumor vascularization. Regulates PER2 nuclear localization and circadian function. Cytoplasmic PML is involved in the regulation of the TGF-beta signaling pathway. Required for normal development of the brain cortex during embryogenesis. Plays a role in granulopoiesis or monopoiesis of myeloid progenitor cells. May play a role regulating stem and progenitor cell fate in tissues as diverse as blood, brain and breast. Shows antiviral activity towards lymphocytic choriomeningitis virus (LCMV) and the vesicular stomatitis virus (VSV).</text>
</comment>
<comment type="subunit">
    <text evidence="2 8 9 10 13 14 16 18 19 20 23 24">Key component of PML bodies. PML bodies are formed by the interaction of PML homodimers (via SUMO-binding motif) with sumoylated PML, leading to the assembly of higher oligomers. Several types of PML bodies have been observed. PML bodies can form hollow spheres that can sequester target proteins inside. Interacts (via SUMO-binding motif) with sumoylated proteins. Interacts (via C-terminus) with p53/TP53. Recruits p53/TP53 and CHEK2 into PML bodies, which promotes p53/TP53 phosphorylation at 'Ser-20' and prevents its proteasomal degradation. Interacts with MDM2, and sequesters MDM2 in the nucleolus, thereby preventing ubiquitination of p53/TP53. Interaction with PML-RARA oncoprotein and certain viral proteins causes disassembly of PML bodies and abolishes the normal PML function. Interacts with TERT, SIRT1, TOPBP1, TRIM27 and TRIM69. Interacts with ELF4 (via C-terminus). Interacts with Lassa virus Z protein and rabies virus phosphoprotein. Interacts (in the cytoplasm) with TGFBR1, TGFBR2 and PKM. Interacts (via the coiled-coil domain and when sumoylated) with SATB1. Interacts with UBE2I; the interaction is enhanced by arsenic binding. Interacts with SMAD2, SMAD3, DAXX, RPL11, HIPK2 and MTOR. Interacts with ITPR3, PPP1A and RB1. Interacts with RNF4, NLRP3, MAGEA2, RBL2, PER2, E2F4 and MAPK7/BMK1. Interacts with CSNK2A1 and CSNK2A3. Interacts with ANKRD2; the interaction is direct. Interacts with PPARGC1A and KAT2A. Interacts (via SUMO-interacting motif) with sumoylated MORC3 (By similarity). Interacts with TRIM16. Interacts with PRDM1 (By similarity). Interacts (via RING-type zinc finger) with EIF4E; the interaction reduces EIF4E affinity for the 5' m7G cap of mRNA, thus reducing nuclear export of cyclin CCND1 (PubMed:11500381, PubMed:11575918).</text>
</comment>
<comment type="interaction">
    <interactant intactId="EBI-3895605">
        <id>Q60953</id>
    </interactant>
    <interactant intactId="EBI-296206">
        <id>P25446</id>
        <label>Fas</label>
    </interactant>
    <organismsDiffer>false</organismsDiffer>
    <experiments>6</experiments>
</comment>
<comment type="interaction">
    <interactant intactId="EBI-3895605">
        <id>Q60953</id>
    </interactant>
    <interactant intactId="EBI-15617004">
        <id>Q505F1</id>
        <label>Nr2c1</label>
    </interactant>
    <organismsDiffer>false</organismsDiffer>
    <experiments>2</experiments>
</comment>
<comment type="interaction">
    <interactant intactId="EBI-3895605">
        <id>Q60953</id>
    </interactant>
    <interactant intactId="EBI-1266779">
        <id>O54943</id>
        <label>Per2</label>
    </interactant>
    <organismsDiffer>false</organismsDiffer>
    <experiments>4</experiments>
</comment>
<comment type="interaction">
    <interactant intactId="EBI-3895605">
        <id>Q60953</id>
    </interactant>
    <interactant intactId="EBI-7213804">
        <id>Q60979</id>
        <label>Skil</label>
    </interactant>
    <organismsDiffer>false</organismsDiffer>
    <experiments>5</experiments>
</comment>
<comment type="interaction">
    <interactant intactId="EBI-3895605">
        <id>Q60953</id>
    </interactant>
    <interactant intactId="EBI-6692904">
        <id>Q8UN00</id>
        <label>gag-pro-pol</label>
    </interactant>
    <organismsDiffer>true</organismsDiffer>
    <experiments>4</experiments>
</comment>
<comment type="interaction">
    <interactant intactId="EBI-3895605">
        <id>Q60953</id>
    </interactant>
    <interactant intactId="EBI-2007911">
        <id>Q16236</id>
        <label>NFE2L2</label>
    </interactant>
    <organismsDiffer>true</organismsDiffer>
    <experiments>2</experiments>
</comment>
<comment type="interaction">
    <interactant intactId="EBI-4406901">
        <id>Q60953-2</id>
    </interactant>
    <interactant intactId="EBI-4312125">
        <id>Q14DJ8</id>
        <label>Axin1</label>
    </interactant>
    <organismsDiffer>false</organismsDiffer>
    <experiments>4</experiments>
</comment>
<comment type="subcellular location">
    <subcellularLocation>
        <location evidence="1">Nucleus</location>
    </subcellularLocation>
    <subcellularLocation>
        <location>Nucleus</location>
        <location>Nucleoplasm</location>
    </subcellularLocation>
    <subcellularLocation>
        <location>Cytoplasm</location>
    </subcellularLocation>
    <subcellularLocation>
        <location>Nucleus</location>
        <location>PML body</location>
    </subcellularLocation>
    <subcellularLocation>
        <location evidence="1">Nucleus</location>
        <location evidence="1">Nucleolus</location>
    </subcellularLocation>
    <subcellularLocation>
        <location>Endoplasmic reticulum membrane</location>
        <topology>Peripheral membrane protein</topology>
        <orientation>Cytoplasmic side</orientation>
    </subcellularLocation>
    <subcellularLocation>
        <location evidence="1">Early endosome membrane</location>
        <topology evidence="1">Peripheral membrane protein</topology>
        <orientation evidence="1">Cytoplasmic side</orientation>
    </subcellularLocation>
    <text evidence="1">Detected in the nucleolus after DNA damage. Acetylation at Lys-497 is essential for its nuclear localization. Within the nucleus, most of PML is expressed in the diffuse nuclear fraction of the nucleoplasm and only a small fraction is found in the matrix-associated nuclear bodies (PML-NBs). The transfer of PML from the nucleoplasm to PML-NBs depends on its phosphorylation and sumoylation. The B1 box and the RING finger are also required for the localization in PML-NBs. Also found in specific membrane structures termed mitochondria-associated membranes (MAMs) which connect the endoplasmic reticulum (ER) and the mitochondria (By similarity).</text>
</comment>
<comment type="alternative products">
    <event type="alternative splicing"/>
    <isoform>
        <id>Q60953-1</id>
        <name>1</name>
        <sequence type="displayed"/>
    </isoform>
    <isoform>
        <id>Q60953-2</id>
        <name>2</name>
        <sequence type="described" ref="VSP_026028"/>
    </isoform>
</comment>
<comment type="domain">
    <text evidence="1">The coiled-coil domain mediates a strong homo/multidimerization activity essential for core assembly of PML-NBs.</text>
</comment>
<comment type="domain">
    <text evidence="1">Binds arsenic via the RING-type zinc finger.</text>
</comment>
<comment type="domain">
    <text evidence="1">The Sumo interaction motif (SIM) is required for efficient ubiquitination, recruitment of proteasome components within PML-NBs and PML degradation in response to arsenic trioxide.</text>
</comment>
<comment type="PTM">
    <text evidence="2 26">Ubiquitinated; mediated by RNF4, RNF111, UHRF1, UBE3A/E6AP, BCR(KLHL20) E3 ubiquitin ligase complex, SIAH1 or SIAH2 and leading to subsequent proteasomal degradation. 'Lys-6'-, 'Lys-11'-, 'Lys-48'- and 'Lys-63'-linked polyubiquitination by RNF4 is polysumoylation-dependent (By similarity). Ubiquitination by RNF111 is polysumoylation-dependent (PubMed:23530056). Ubiquitination by BCR(KLHL20) E3 ubiquitin ligase complex requires CDK1/2-mediated phosphorylation at Ser-528 which in turn is recognized by prolyl-isopeptidase PIN1 and PIN1-catalyzed isomerization further potentiates PML interaction with KLHL20 (By similarity).</text>
</comment>
<comment type="PTM">
    <text evidence="2">Sumoylation regulates PML's: stability in response to extracellular or intracellular stimuli, transcription directly and indirectly, through sequestration of or dissociation of the transcription factors from PML-NBs, ability to regulate apoptosis and its anti-viral activities. It is also essential for: maintaining proper PML nuclear bodies (PML-NBs) structure and normal function, recruitment of components of PML-NBs, the turnover and retention of PML in PML-NBs and the integrity of PML-NBs. Undergoes 'Lys-11'-linked sumoylation. Sumoylation on all three sites (Lys-70, Lys-165 and Lys-500) is required for nuclear body formation. Sumoylation on Lys-165 is a prerequisite for sumoylation on Lys-70. Lys-70 and Lys-165 are sumoylated by PISA1 and PIAS2. PIAS1-mediated sumoylation of PML promotes its interaction with CSNK2A1/CK2 and phosphorylation at Ser-575 which in turn triggers its ubiquitin-mediated degradation. Sumoylation at Lys-500 by RANBP2 is essential for the proper assembly of PML-NBs. Desumoylated by SENP1, SENP2, SENP3, SENP5 and SENP6 (By similarity).</text>
</comment>
<comment type="PTM">
    <text evidence="2">Phosphorylation is a major regulatory mechanism that controls PML protein abundance and the number and size of PML nuclear bodies (PML-NBs). Phosphorylated in response to DNA damage, probably by ATR. HIPK2-mediated phosphorylation at Ser-17, Ser-45 and Ser-47 leads to increased accumulation of PML protein and its sumoylation and is required for the maximal pro-apoptotic activity of PML after DNA damage. MAPK1- mediated phosphorylations at Ser-404, Ser-515 and Ser-540 and CDK1/2-mediated phosphorylation at Ser-528 promote PIN1-dependent PML degradation. CK2-mediated phosphorylation at Ser-575 primes PML ubiquitination via an unidentified ubiquitin ligase (By similarity).</text>
</comment>
<comment type="PTM">
    <text evidence="2">Acetylation at Lys-497 is essential for its nuclear localization. Deacetylated at Lys-497 by SIRT1 and this deacetylation promotes PML control of PER2 nuclear localization (By similarity).</text>
</comment>
<comment type="disruption phenotype">
    <text evidence="12 18 19 23 25 27 28">Mice are born at the expected Mendelian rate and are fertile. They show leukopenia with reduced levels of circulating granulocytes and myeloid cells. They are highly susceptible to infections, causing a reduced life span. Mice do not exhibit normal apoptosis of hematopoietic stem cells after DNA damage due to irradiation. They do not exhibit normal apoptosis in response to FAS, TNF, TGFB1, interferons and ceramide, and show impaired activation of caspases in response to pro-apoptotic stimuli. Mice are highly susceptible to chemical carcinogens. Mice display accelerated revascularization after ischemia. Newborns have smaller brains with a reduced size of the brain cortex. Mice display aberrant learning and memory, lower levels of anxiety-like behavior and specific deficits in long-term plasticity. Mice display a compromised endogenous circadian clock with reduced precision and stability of the period length.</text>
</comment>
<comment type="sequence caution" evidence="31">
    <conflict type="erroneous initiation">
        <sequence resource="EMBL-CDS" id="AAA97601"/>
    </conflict>
    <text>Truncated N-terminus.</text>
</comment>
<reference key="1">
    <citation type="journal article" date="2005" name="Science">
        <title>The transcriptional landscape of the mammalian genome.</title>
        <authorList>
            <person name="Carninci P."/>
            <person name="Kasukawa T."/>
            <person name="Katayama S."/>
            <person name="Gough J."/>
            <person name="Frith M.C."/>
            <person name="Maeda N."/>
            <person name="Oyama R."/>
            <person name="Ravasi T."/>
            <person name="Lenhard B."/>
            <person name="Wells C."/>
            <person name="Kodzius R."/>
            <person name="Shimokawa K."/>
            <person name="Bajic V.B."/>
            <person name="Brenner S.E."/>
            <person name="Batalov S."/>
            <person name="Forrest A.R."/>
            <person name="Zavolan M."/>
            <person name="Davis M.J."/>
            <person name="Wilming L.G."/>
            <person name="Aidinis V."/>
            <person name="Allen J.E."/>
            <person name="Ambesi-Impiombato A."/>
            <person name="Apweiler R."/>
            <person name="Aturaliya R.N."/>
            <person name="Bailey T.L."/>
            <person name="Bansal M."/>
            <person name="Baxter L."/>
            <person name="Beisel K.W."/>
            <person name="Bersano T."/>
            <person name="Bono H."/>
            <person name="Chalk A.M."/>
            <person name="Chiu K.P."/>
            <person name="Choudhary V."/>
            <person name="Christoffels A."/>
            <person name="Clutterbuck D.R."/>
            <person name="Crowe M.L."/>
            <person name="Dalla E."/>
            <person name="Dalrymple B.P."/>
            <person name="de Bono B."/>
            <person name="Della Gatta G."/>
            <person name="di Bernardo D."/>
            <person name="Down T."/>
            <person name="Engstrom P."/>
            <person name="Fagiolini M."/>
            <person name="Faulkner G."/>
            <person name="Fletcher C.F."/>
            <person name="Fukushima T."/>
            <person name="Furuno M."/>
            <person name="Futaki S."/>
            <person name="Gariboldi M."/>
            <person name="Georgii-Hemming P."/>
            <person name="Gingeras T.R."/>
            <person name="Gojobori T."/>
            <person name="Green R.E."/>
            <person name="Gustincich S."/>
            <person name="Harbers M."/>
            <person name="Hayashi Y."/>
            <person name="Hensch T.K."/>
            <person name="Hirokawa N."/>
            <person name="Hill D."/>
            <person name="Huminiecki L."/>
            <person name="Iacono M."/>
            <person name="Ikeo K."/>
            <person name="Iwama A."/>
            <person name="Ishikawa T."/>
            <person name="Jakt M."/>
            <person name="Kanapin A."/>
            <person name="Katoh M."/>
            <person name="Kawasawa Y."/>
            <person name="Kelso J."/>
            <person name="Kitamura H."/>
            <person name="Kitano H."/>
            <person name="Kollias G."/>
            <person name="Krishnan S.P."/>
            <person name="Kruger A."/>
            <person name="Kummerfeld S.K."/>
            <person name="Kurochkin I.V."/>
            <person name="Lareau L.F."/>
            <person name="Lazarevic D."/>
            <person name="Lipovich L."/>
            <person name="Liu J."/>
            <person name="Liuni S."/>
            <person name="McWilliam S."/>
            <person name="Madan Babu M."/>
            <person name="Madera M."/>
            <person name="Marchionni L."/>
            <person name="Matsuda H."/>
            <person name="Matsuzawa S."/>
            <person name="Miki H."/>
            <person name="Mignone F."/>
            <person name="Miyake S."/>
            <person name="Morris K."/>
            <person name="Mottagui-Tabar S."/>
            <person name="Mulder N."/>
            <person name="Nakano N."/>
            <person name="Nakauchi H."/>
            <person name="Ng P."/>
            <person name="Nilsson R."/>
            <person name="Nishiguchi S."/>
            <person name="Nishikawa S."/>
            <person name="Nori F."/>
            <person name="Ohara O."/>
            <person name="Okazaki Y."/>
            <person name="Orlando V."/>
            <person name="Pang K.C."/>
            <person name="Pavan W.J."/>
            <person name="Pavesi G."/>
            <person name="Pesole G."/>
            <person name="Petrovsky N."/>
            <person name="Piazza S."/>
            <person name="Reed J."/>
            <person name="Reid J.F."/>
            <person name="Ring B.Z."/>
            <person name="Ringwald M."/>
            <person name="Rost B."/>
            <person name="Ruan Y."/>
            <person name="Salzberg S.L."/>
            <person name="Sandelin A."/>
            <person name="Schneider C."/>
            <person name="Schoenbach C."/>
            <person name="Sekiguchi K."/>
            <person name="Semple C.A."/>
            <person name="Seno S."/>
            <person name="Sessa L."/>
            <person name="Sheng Y."/>
            <person name="Shibata Y."/>
            <person name="Shimada H."/>
            <person name="Shimada K."/>
            <person name="Silva D."/>
            <person name="Sinclair B."/>
            <person name="Sperling S."/>
            <person name="Stupka E."/>
            <person name="Sugiura K."/>
            <person name="Sultana R."/>
            <person name="Takenaka Y."/>
            <person name="Taki K."/>
            <person name="Tammoja K."/>
            <person name="Tan S.L."/>
            <person name="Tang S."/>
            <person name="Taylor M.S."/>
            <person name="Tegner J."/>
            <person name="Teichmann S.A."/>
            <person name="Ueda H.R."/>
            <person name="van Nimwegen E."/>
            <person name="Verardo R."/>
            <person name="Wei C.L."/>
            <person name="Yagi K."/>
            <person name="Yamanishi H."/>
            <person name="Zabarovsky E."/>
            <person name="Zhu S."/>
            <person name="Zimmer A."/>
            <person name="Hide W."/>
            <person name="Bult C."/>
            <person name="Grimmond S.M."/>
            <person name="Teasdale R.D."/>
            <person name="Liu E.T."/>
            <person name="Brusic V."/>
            <person name="Quackenbush J."/>
            <person name="Wahlestedt C."/>
            <person name="Mattick J.S."/>
            <person name="Hume D.A."/>
            <person name="Kai C."/>
            <person name="Sasaki D."/>
            <person name="Tomaru Y."/>
            <person name="Fukuda S."/>
            <person name="Kanamori-Katayama M."/>
            <person name="Suzuki M."/>
            <person name="Aoki J."/>
            <person name="Arakawa T."/>
            <person name="Iida J."/>
            <person name="Imamura K."/>
            <person name="Itoh M."/>
            <person name="Kato T."/>
            <person name="Kawaji H."/>
            <person name="Kawagashira N."/>
            <person name="Kawashima T."/>
            <person name="Kojima M."/>
            <person name="Kondo S."/>
            <person name="Konno H."/>
            <person name="Nakano K."/>
            <person name="Ninomiya N."/>
            <person name="Nishio T."/>
            <person name="Okada M."/>
            <person name="Plessy C."/>
            <person name="Shibata K."/>
            <person name="Shiraki T."/>
            <person name="Suzuki S."/>
            <person name="Tagami M."/>
            <person name="Waki K."/>
            <person name="Watahiki A."/>
            <person name="Okamura-Oho Y."/>
            <person name="Suzuki H."/>
            <person name="Kawai J."/>
            <person name="Hayashizaki Y."/>
        </authorList>
    </citation>
    <scope>NUCLEOTIDE SEQUENCE [LARGE SCALE MRNA] (ISOFORM 1)</scope>
    <source>
        <strain>C57BL/6J</strain>
        <tissue>Lung</tissue>
    </source>
</reference>
<reference key="2">
    <citation type="journal article" date="2004" name="Genome Res.">
        <title>The status, quality, and expansion of the NIH full-length cDNA project: the Mammalian Gene Collection (MGC).</title>
        <authorList>
            <consortium name="The MGC Project Team"/>
        </authorList>
    </citation>
    <scope>NUCLEOTIDE SEQUENCE [LARGE SCALE MRNA] (ISOFORM 2)</scope>
    <source>
        <strain>FVB/N</strain>
        <tissue>Salivary gland</tissue>
    </source>
</reference>
<reference key="3">
    <citation type="journal article" date="1995" name="Mamm. Genome">
        <title>Cloning of the murine homolog of the leukemia-associated PML gene.</title>
        <authorList>
            <person name="Goddard A.D."/>
            <person name="Yuan J.Q."/>
            <person name="Fairbairn L."/>
            <person name="Dexter M."/>
            <person name="Borrow J."/>
            <person name="Kozak C."/>
            <person name="Solomon E."/>
        </authorList>
    </citation>
    <scope>NUCLEOTIDE SEQUENCE [MRNA] OF 4-839 (ISOFORM 2)</scope>
</reference>
<reference key="4">
    <citation type="submission" date="2000-07" db="EMBL/GenBank/DDBJ databases">
        <authorList>
            <person name="Goddard A.D."/>
            <person name="Howe K."/>
            <person name="Solomon E."/>
        </authorList>
    </citation>
    <scope>SEQUENCE REVISION TO 130; 212; 284; 638; 731; 750; 770-772; 820 AND 839</scope>
</reference>
<reference key="5">
    <citation type="journal article" date="1998" name="Nat. Genet.">
        <title>PML is essential for multiple apoptotic pathways.</title>
        <authorList>
            <person name="Wang Z.G."/>
            <person name="Ruggero D."/>
            <person name="Ronchetti S."/>
            <person name="Zhong S."/>
            <person name="Gaboli M."/>
            <person name="Rivi R."/>
            <person name="Pandolfi P.P."/>
        </authorList>
    </citation>
    <scope>DISRUPTION PHENOTYPE</scope>
    <scope>FUNCTION</scope>
</reference>
<reference key="6">
    <citation type="journal article" date="1998" name="Science">
        <title>Role of PML in cell growth and the retinoic acid pathway.</title>
        <authorList>
            <person name="Wang Z.G."/>
            <person name="Delva L."/>
            <person name="Gaboli M."/>
            <person name="Rivi R."/>
            <person name="Giorgio M."/>
            <person name="Cordon-Cardo C."/>
            <person name="Grosveld F."/>
            <person name="Pandolfi P.P."/>
        </authorList>
    </citation>
    <scope>DISRUPTION PHENOTYPE</scope>
    <scope>FUNCTION</scope>
</reference>
<reference key="7">
    <citation type="journal article" date="1999" name="Oncogene">
        <title>A role for PML and the nuclear body in genomic stability.</title>
        <authorList>
            <person name="Zhong S."/>
            <person name="Hu P."/>
            <person name="Ye T.Z."/>
            <person name="Stan R."/>
            <person name="Ellis N.A."/>
            <person name="Pandolfi P.P."/>
        </authorList>
    </citation>
    <scope>FUNCTION</scope>
</reference>
<reference key="8">
    <citation type="journal article" date="2000" name="Blood">
        <title>Role of SUMO-1-modified PML in nuclear body formation.</title>
        <authorList>
            <person name="Zhong S."/>
            <person name="Muller S."/>
            <person name="Ronchetti S."/>
            <person name="Freemont P.S."/>
            <person name="Dejean A."/>
            <person name="Pandolfi P.P."/>
        </authorList>
    </citation>
    <scope>SUMOYLATION</scope>
    <scope>SUBCELLULAR LOCATION</scope>
    <scope>SUBUNIT</scope>
</reference>
<reference key="9">
    <citation type="journal article" date="2001" name="EMBO J.">
        <title>PML RING suppresses oncogenic transformation by reducing the affinity of eIF4E for mRNA.</title>
        <authorList>
            <person name="Cohen N."/>
            <person name="Sharma M."/>
            <person name="Kentsis A."/>
            <person name="Perez J.M."/>
            <person name="Strudwick S."/>
            <person name="Borden K.L."/>
        </authorList>
    </citation>
    <scope>INTERACTION WITH EIF4E</scope>
</reference>
<reference key="10">
    <citation type="journal article" date="2001" name="J. Mol. Biol.">
        <title>The RING domains of the promyelocytic leukemia protein PML and the arenaviral protein Z repress translation by directly inhibiting translation initiation factor eIF4E.</title>
        <authorList>
            <person name="Kentsis A."/>
            <person name="Dwyer E.C."/>
            <person name="Perez J.M."/>
            <person name="Sharma M."/>
            <person name="Chen A."/>
            <person name="Pan Z.Q."/>
            <person name="Borden K.L."/>
        </authorList>
    </citation>
    <scope>INTERACTION WITH EIF4E</scope>
</reference>
<reference key="11">
    <citation type="journal article" date="2002" name="J. Virol.">
        <title>Effects of promyelocytic leukemia protein on virus-host balance.</title>
        <authorList>
            <person name="Bonilla W.V."/>
            <person name="Pinschewer D.D."/>
            <person name="Klenerman P."/>
            <person name="Rousson V."/>
            <person name="Gaboli M."/>
            <person name="Pandolfi P.P."/>
            <person name="Zinkernagel R.M."/>
            <person name="Salvato M.S."/>
            <person name="Hengartner H."/>
        </authorList>
    </citation>
    <scope>FUNCTION IN LCMV AND VSV RESTRICTION</scope>
</reference>
<reference key="12">
    <citation type="journal article" date="2002" name="Oncogene">
        <title>Rabies virus P and small P products interact directly with PML and reorganize PML nuclear bodies.</title>
        <authorList>
            <person name="Blondel D."/>
            <person name="Regad T."/>
            <person name="Poisson N."/>
            <person name="Pavie B."/>
            <person name="Harper F."/>
            <person name="Pandolfi P.P."/>
            <person name="De The H."/>
            <person name="Chelbi-Alix M.K."/>
        </authorList>
    </citation>
    <scope>DISRUPTION PHENOTYPE</scope>
    <scope>FUNCTION</scope>
</reference>
<reference key="13">
    <citation type="journal article" date="2003" name="Exp. Cell Res.">
        <title>Forced expression of RNF36 induces cell apoptosis.</title>
        <authorList>
            <person name="Shyu H.-W."/>
            <person name="Hsu S.-H."/>
            <person name="Hsieh-Li H.-M."/>
            <person name="Li H."/>
        </authorList>
    </citation>
    <scope>INTERACTION WITH TRIM69</scope>
</reference>
<reference key="14">
    <citation type="journal article" date="2004" name="EMBO J.">
        <title>Impairment of p53 acetylation, stability and function by an oncogenic transcription factor.</title>
        <authorList>
            <person name="Insinga A."/>
            <person name="Monestiroli S."/>
            <person name="Ronzoni S."/>
            <person name="Carbone R."/>
            <person name="Pearson M."/>
            <person name="Pruneri G."/>
            <person name="Viale G."/>
            <person name="Appella E."/>
            <person name="Pelicci P."/>
            <person name="Minucci S."/>
        </authorList>
    </citation>
    <scope>FUNCTION</scope>
</reference>
<reference key="15">
    <citation type="journal article" date="2004" name="J. Biol. Chem.">
        <title>The coiled-coil domain is the structural determinant for mammalian homologues of Drosophila Sina-mediated degradation of promyelocytic leukemia protein and other tripartite motif proteins by the proteasome.</title>
        <authorList>
            <person name="Fanelli M."/>
            <person name="Fantozzi A."/>
            <person name="De Luca P."/>
            <person name="Caprodossi S."/>
            <person name="Matsuzawa S."/>
            <person name="Lazar M.A."/>
            <person name="Pelicci P.G."/>
            <person name="Minucci S."/>
        </authorList>
    </citation>
    <scope>INTERACTION WITH SIAH2</scope>
    <scope>DEGRADATION</scope>
</reference>
<reference key="16">
    <citation type="journal article" date="2004" name="Nat. Cell Biol.">
        <title>PML regulates p53 stability by sequestering Mdm2 to the nucleolus.</title>
        <authorList>
            <person name="Bernardi R."/>
            <person name="Scaglioni P.P."/>
            <person name="Bergmann S."/>
            <person name="Horn H.F."/>
            <person name="Vousden K.H."/>
            <person name="Pandolfi P.P."/>
        </authorList>
    </citation>
    <scope>FUNCTION</scope>
    <scope>INTERACTION WITH MDM2 AND RPL11</scope>
    <scope>SUBCELLULAR LOCATION</scope>
</reference>
<reference key="17">
    <citation type="journal article" date="2004" name="Nature">
        <title>Cytoplasmic PML function in TGF-beta signalling.</title>
        <authorList>
            <person name="Lin H.K."/>
            <person name="Bergmann S."/>
            <person name="Pandolfi P.P."/>
        </authorList>
    </citation>
    <scope>FUNCTION</scope>
</reference>
<reference key="18">
    <citation type="journal article" date="2006" name="Nature">
        <title>PML inhibits HIF-1alpha translation and neoangiogenesis through repression of mTOR.</title>
        <authorList>
            <person name="Bernardi R."/>
            <person name="Guernah I."/>
            <person name="Jin D."/>
            <person name="Grisendi S."/>
            <person name="Alimonti A."/>
            <person name="Teruya-Feldstein J."/>
            <person name="Cordon-Cardo C."/>
            <person name="Simon M.C."/>
            <person name="Rafii S."/>
            <person name="Pandolfi P.P."/>
        </authorList>
    </citation>
    <scope>DISRUPTION PHENOTYPE</scope>
    <scope>FUNCTION</scope>
    <scope>INTERACTION WITH MTOR</scope>
</reference>
<reference key="19">
    <citation type="journal article" date="2007" name="Proc. Natl. Acad. Sci. U.S.A.">
        <title>Large-scale phosphorylation analysis of mouse liver.</title>
        <authorList>
            <person name="Villen J."/>
            <person name="Beausoleil S.A."/>
            <person name="Gerber S.A."/>
            <person name="Gygi S.P."/>
        </authorList>
    </citation>
    <scope>PHOSPHORYLATION [LARGE SCALE ANALYSIS] AT SER-17; SER-514 AND SER-515</scope>
    <scope>IDENTIFICATION BY MASS SPECTROMETRY [LARGE SCALE ANALYSIS]</scope>
    <source>
        <tissue>Liver</tissue>
    </source>
</reference>
<reference key="20">
    <citation type="journal article" date="2008" name="J. Proteome Res.">
        <title>Specific phosphopeptide enrichment with immobilized titanium ion affinity chromatography adsorbent for phosphoproteome analysis.</title>
        <authorList>
            <person name="Zhou H."/>
            <person name="Ye M."/>
            <person name="Dong J."/>
            <person name="Han G."/>
            <person name="Jiang X."/>
            <person name="Wu R."/>
            <person name="Zou H."/>
        </authorList>
    </citation>
    <scope>IDENTIFICATION BY MASS SPECTROMETRY [LARGE SCALE ANALYSIS]</scope>
    <source>
        <tissue>Liver</tissue>
    </source>
</reference>
<reference key="21">
    <citation type="journal article" date="2009" name="Cell Cycle">
        <title>PML: a tumor suppressor that regulates cell fate in mammary gland.</title>
        <authorList>
            <person name="Li W."/>
            <person name="Rich T."/>
            <person name="Watson C.J."/>
        </authorList>
    </citation>
    <scope>REVIEW ON FUNCTION</scope>
</reference>
<reference key="22">
    <citation type="journal article" date="2009" name="Mol. Cell. Proteomics">
        <title>Large scale localization of protein phosphorylation by use of electron capture dissociation mass spectrometry.</title>
        <authorList>
            <person name="Sweet S.M."/>
            <person name="Bailey C.M."/>
            <person name="Cunningham D.L."/>
            <person name="Heath J.K."/>
            <person name="Cooper H.J."/>
        </authorList>
    </citation>
    <scope>PHOSPHORYLATION [LARGE SCALE ANALYSIS] AT SER-528</scope>
    <scope>IDENTIFICATION BY MASS SPECTROMETRY [LARGE SCALE ANALYSIS]</scope>
    <source>
        <tissue>Embryonic fibroblast</tissue>
    </source>
</reference>
<reference key="23">
    <citation type="journal article" date="2009" name="Nat. Neurosci.">
        <title>The tumor suppressor Pml regulates cell fate in the developing neocortex.</title>
        <authorList>
            <person name="Regad T."/>
            <person name="Bellodi C."/>
            <person name="Nicotera P."/>
            <person name="Salomoni P."/>
        </authorList>
    </citation>
    <scope>DISRUPTION PHENOTYPE</scope>
    <scope>INTERACTION WITH RB1</scope>
    <scope>FUNCTION</scope>
</reference>
<reference key="24">
    <citation type="journal article" date="2010" name="Cell">
        <title>A tissue-specific atlas of mouse protein phosphorylation and expression.</title>
        <authorList>
            <person name="Huttlin E.L."/>
            <person name="Jedrychowski M.P."/>
            <person name="Elias J.E."/>
            <person name="Goswami T."/>
            <person name="Rad R."/>
            <person name="Beausoleil S.A."/>
            <person name="Villen J."/>
            <person name="Haas W."/>
            <person name="Sowa M.E."/>
            <person name="Gygi S.P."/>
        </authorList>
    </citation>
    <scope>PHOSPHORYLATION [LARGE SCALE ANALYSIS] AT SER-17; SER-404; SER-503; SER-514; SER-515; SER-528; THR-535; SER-536 AND SER-609</scope>
    <scope>IDENTIFICATION BY MASS SPECTROMETRY [LARGE SCALE ANALYSIS]</scope>
    <source>
        <tissue>Brain</tissue>
        <tissue>Brown adipose tissue</tissue>
        <tissue>Heart</tissue>
        <tissue>Kidney</tissue>
        <tissue>Liver</tissue>
        <tissue>Lung</tissue>
        <tissue>Pancreas</tissue>
        <tissue>Spleen</tissue>
        <tissue>Testis</tissue>
    </source>
</reference>
<reference key="25">
    <citation type="journal article" date="2010" name="Science">
        <title>PML regulates apoptosis at endoplasmic reticulum by modulating calcium release.</title>
        <authorList>
            <person name="Giorgi C."/>
            <person name="Ito K."/>
            <person name="Lin H.K."/>
            <person name="Santangelo C."/>
            <person name="Wieckowski M.R."/>
            <person name="Lebiedzinska M."/>
            <person name="Bononi A."/>
            <person name="Bonora M."/>
            <person name="Duszynski J."/>
            <person name="Bernardi R."/>
            <person name="Rizzuto R."/>
            <person name="Tacchetti C."/>
            <person name="Pinton P."/>
            <person name="Pandolfi P.P."/>
        </authorList>
    </citation>
    <scope>FUNCTION</scope>
    <scope>INTERACTION WITH ITPR3</scope>
    <scope>SUBCELLULAR LOCATION</scope>
</reference>
<reference key="26">
    <citation type="journal article" date="2011" name="Genes Cancer">
        <title>A role for PML in innate immunity.</title>
        <authorList>
            <person name="Lunardi A."/>
            <person name="Gaboli M."/>
            <person name="Giorgio M."/>
            <person name="Rivi R."/>
            <person name="Bygrave A."/>
            <person name="Antoniou M."/>
            <person name="Drabek D."/>
            <person name="Dzierzak E."/>
            <person name="Fagioli M."/>
            <person name="Salmena L."/>
            <person name="Botto M."/>
            <person name="Cordon-Cardo C."/>
            <person name="Luzzatto L."/>
            <person name="Pelicci P.G."/>
            <person name="Grosveld F."/>
            <person name="Pandolfi P.P."/>
        </authorList>
    </citation>
    <scope>FUNCTION</scope>
</reference>
<reference key="27">
    <citation type="journal article" date="2011" name="Int. Immunol.">
        <title>PML is a key component for the differentiation of myeloid progenitor cells to macrophages.</title>
        <authorList>
            <person name="Khalfin-Rabinovich Y."/>
            <person name="Weinstein A."/>
            <person name="Levi B.Z."/>
        </authorList>
    </citation>
    <scope>FUNCTION</scope>
</reference>
<reference key="28">
    <citation type="journal article" date="2011" name="Mol. Neurobiol.">
        <title>The role of PML in the nervous system.</title>
        <authorList>
            <person name="Salomoni P."/>
            <person name="Betts-Henderson J."/>
        </authorList>
    </citation>
    <scope>REVIEW ON FUNCTION</scope>
</reference>
<reference key="29">
    <citation type="journal article" date="2012" name="EMBO J.">
        <title>PML regulates PER2 nuclear localization and circadian function.</title>
        <authorList>
            <person name="Miki T."/>
            <person name="Xu Z."/>
            <person name="Chen-Goodspeed M."/>
            <person name="Liu M."/>
            <person name="Van Oort-Jansen A."/>
            <person name="Rea M.A."/>
            <person name="Zhao Z."/>
            <person name="Lee C.C."/>
            <person name="Chang K.S."/>
        </authorList>
    </citation>
    <scope>FUNCTION IN CIRCADIAN CLOCK</scope>
    <scope>SUBCELLULAR LOCATION</scope>
    <scope>INTERACTION WITH PML</scope>
    <scope>DISRUPTION PHENOTYPE</scope>
</reference>
<reference key="30">
    <citation type="journal article" date="2012" name="J. Clin. Invest.">
        <title>A metabolic prosurvival role for PML in breast cancer.</title>
        <authorList>
            <person name="Carracedo A."/>
            <person name="Weiss D."/>
            <person name="Leliaert A.K."/>
            <person name="Bhasin M."/>
            <person name="de Boer V.C."/>
            <person name="Laurent G."/>
            <person name="Adams A.C."/>
            <person name="Sundvall M."/>
            <person name="Song S.J."/>
            <person name="Ito K."/>
            <person name="Finley L.S."/>
            <person name="Egia A."/>
            <person name="Libermann T."/>
            <person name="Gerhart-Hines Z."/>
            <person name="Puigserver P."/>
            <person name="Haigis M.C."/>
            <person name="Maratos-Flier E."/>
            <person name="Richardson A.L."/>
            <person name="Schafer Z.T."/>
            <person name="Pandolfi P.P."/>
        </authorList>
    </citation>
    <scope>FUNCTION</scope>
    <scope>SUBCELLULAR LOCATION</scope>
    <scope>INTERACTION WITH PPARGC1A AND KAT2A</scope>
</reference>
<reference key="31">
    <citation type="journal article" date="2013" name="Genes Brain Behav.">
        <title>Impaired cognitive function and reduced anxiety-related behavior in a promyelocytic leukemia (PML) tumor suppressor protein-deficient mouse.</title>
        <authorList>
            <person name="Butler K."/>
            <person name="Martinez L.A."/>
            <person name="Tejada-Simon M.V."/>
        </authorList>
    </citation>
    <scope>FUNCTION</scope>
    <scope>DISRUPTION PHENOTYPE</scope>
</reference>
<reference key="32">
    <citation type="journal article" date="2013" name="Mol. Cell. Biol.">
        <title>Arkadia, a novel SUMO-targeted ubiquitin ligase involved in PML degradation.</title>
        <authorList>
            <person name="Erker Y."/>
            <person name="Neyret-Kahn H."/>
            <person name="Seeler J.S."/>
            <person name="Dejean A."/>
            <person name="Atfi A."/>
            <person name="Levy L."/>
        </authorList>
    </citation>
    <scope>UBIQUITINATION</scope>
</reference>
<accession>Q60953</accession>
<accession>Q8CEJ1</accession>
<accession>Q8VCC4</accession>
<proteinExistence type="evidence at protein level"/>
<organism>
    <name type="scientific">Mus musculus</name>
    <name type="common">Mouse</name>
    <dbReference type="NCBI Taxonomy" id="10090"/>
    <lineage>
        <taxon>Eukaryota</taxon>
        <taxon>Metazoa</taxon>
        <taxon>Chordata</taxon>
        <taxon>Craniata</taxon>
        <taxon>Vertebrata</taxon>
        <taxon>Euteleostomi</taxon>
        <taxon>Mammalia</taxon>
        <taxon>Eutheria</taxon>
        <taxon>Euarchontoglires</taxon>
        <taxon>Glires</taxon>
        <taxon>Rodentia</taxon>
        <taxon>Myomorpha</taxon>
        <taxon>Muroidea</taxon>
        <taxon>Muridae</taxon>
        <taxon>Murinae</taxon>
        <taxon>Mus</taxon>
        <taxon>Mus</taxon>
    </lineage>
</organism>
<gene>
    <name type="primary">Pml</name>
</gene>
<protein>
    <recommendedName>
        <fullName>Protein PML</fullName>
    </recommendedName>
</protein>